<evidence type="ECO:0000255" key="1">
    <source>
        <dbReference type="HAMAP-Rule" id="MF_00823"/>
    </source>
</evidence>
<evidence type="ECO:0000255" key="2">
    <source>
        <dbReference type="PROSITE-ProRule" id="PRU01137"/>
    </source>
</evidence>
<comment type="function">
    <text evidence="1">Component of the acetyl coenzyme A carboxylase (ACC) complex. First, biotin carboxylase catalyzes the carboxylation of biotin on its carrier protein (BCCP) and then the CO(2) group is transferred by the carboxyltransferase to acetyl-CoA to form malonyl-CoA.</text>
</comment>
<comment type="catalytic activity">
    <reaction evidence="1">
        <text>N(6)-carboxybiotinyl-L-lysyl-[protein] + acetyl-CoA = N(6)-biotinyl-L-lysyl-[protein] + malonyl-CoA</text>
        <dbReference type="Rhea" id="RHEA:54728"/>
        <dbReference type="Rhea" id="RHEA-COMP:10505"/>
        <dbReference type="Rhea" id="RHEA-COMP:10506"/>
        <dbReference type="ChEBI" id="CHEBI:57288"/>
        <dbReference type="ChEBI" id="CHEBI:57384"/>
        <dbReference type="ChEBI" id="CHEBI:83144"/>
        <dbReference type="ChEBI" id="CHEBI:83145"/>
        <dbReference type="EC" id="2.1.3.15"/>
    </reaction>
</comment>
<comment type="pathway">
    <text evidence="1">Lipid metabolism; malonyl-CoA biosynthesis; malonyl-CoA from acetyl-CoA: step 1/1.</text>
</comment>
<comment type="subunit">
    <text evidence="1">Acetyl-CoA carboxylase is a heterohexamer composed of biotin carboxyl carrier protein (AccB), biotin carboxylase (AccC) and two subunits each of ACCase subunit alpha (AccA) and ACCase subunit beta (AccD).</text>
</comment>
<comment type="subcellular location">
    <subcellularLocation>
        <location evidence="1">Cytoplasm</location>
    </subcellularLocation>
</comment>
<comment type="similarity">
    <text evidence="1">Belongs to the AccA family.</text>
</comment>
<protein>
    <recommendedName>
        <fullName evidence="1">Acetyl-coenzyme A carboxylase carboxyl transferase subunit alpha</fullName>
        <shortName evidence="1">ACCase subunit alpha</shortName>
        <shortName evidence="1">Acetyl-CoA carboxylase carboxyltransferase subunit alpha</shortName>
        <ecNumber evidence="1">2.1.3.15</ecNumber>
    </recommendedName>
</protein>
<organism>
    <name type="scientific">Nitratiruptor sp. (strain SB155-2)</name>
    <dbReference type="NCBI Taxonomy" id="387092"/>
    <lineage>
        <taxon>Bacteria</taxon>
        <taxon>Pseudomonadati</taxon>
        <taxon>Campylobacterota</taxon>
        <taxon>Epsilonproteobacteria</taxon>
        <taxon>Nautiliales</taxon>
        <taxon>Nitratiruptoraceae</taxon>
        <taxon>Nitratiruptor</taxon>
    </lineage>
</organism>
<proteinExistence type="inferred from homology"/>
<sequence>MATYLDFEQKIKEIENELEAAKARGDTAAIEIFEKDLQKEASKTYKNLSDYQKLQLARHPDRPYALDYIRLILDDAYEIHGDRCFRDDPAILCYLGYIDGQKTLVIGEQKGRGTKNKLKRNFGMPHPEGYRKALRAAKMAEKFGLPILMLIDTPGAYPGIGAEERGQSEAIARNLIEFSMLDTPTISIVIGEGGSGGALAIGVADKLAMLKYSVFSVISPEGCAAILWNDPAKVEQATKALKITAEDLKELGLIDDIIDEPFMGAHRDKEGAAKALKEYYLQNIRELMQMDPKERLEKRYEKLMKMGRFKE</sequence>
<name>ACCA_NITSB</name>
<accession>A6Q1S1</accession>
<reference key="1">
    <citation type="journal article" date="2007" name="Proc. Natl. Acad. Sci. U.S.A.">
        <title>Deep-sea vent epsilon-proteobacterial genomes provide insights into emergence of pathogens.</title>
        <authorList>
            <person name="Nakagawa S."/>
            <person name="Takaki Y."/>
            <person name="Shimamura S."/>
            <person name="Reysenbach A.-L."/>
            <person name="Takai K."/>
            <person name="Horikoshi K."/>
        </authorList>
    </citation>
    <scope>NUCLEOTIDE SEQUENCE [LARGE SCALE GENOMIC DNA]</scope>
    <source>
        <strain>SB155-2</strain>
    </source>
</reference>
<feature type="chain" id="PRO_1000062643" description="Acetyl-coenzyme A carboxylase carboxyl transferase subunit alpha">
    <location>
        <begin position="1"/>
        <end position="311"/>
    </location>
</feature>
<feature type="domain" description="CoA carboxyltransferase C-terminal" evidence="2">
    <location>
        <begin position="34"/>
        <end position="286"/>
    </location>
</feature>
<dbReference type="EC" id="2.1.3.15" evidence="1"/>
<dbReference type="EMBL" id="AP009178">
    <property type="protein sequence ID" value="BAF69430.1"/>
    <property type="molecule type" value="Genomic_DNA"/>
</dbReference>
<dbReference type="RefSeq" id="WP_012081693.1">
    <property type="nucleotide sequence ID" value="NC_009662.1"/>
</dbReference>
<dbReference type="SMR" id="A6Q1S1"/>
<dbReference type="FunCoup" id="A6Q1S1">
    <property type="interactions" value="409"/>
</dbReference>
<dbReference type="STRING" id="387092.NIS_0316"/>
<dbReference type="KEGG" id="nis:NIS_0316"/>
<dbReference type="eggNOG" id="COG0825">
    <property type="taxonomic scope" value="Bacteria"/>
</dbReference>
<dbReference type="HOGENOM" id="CLU_015486_0_2_7"/>
<dbReference type="InParanoid" id="A6Q1S1"/>
<dbReference type="OrthoDB" id="9808023at2"/>
<dbReference type="UniPathway" id="UPA00655">
    <property type="reaction ID" value="UER00711"/>
</dbReference>
<dbReference type="Proteomes" id="UP000001118">
    <property type="component" value="Chromosome"/>
</dbReference>
<dbReference type="GO" id="GO:0009317">
    <property type="term" value="C:acetyl-CoA carboxylase complex"/>
    <property type="evidence" value="ECO:0007669"/>
    <property type="project" value="InterPro"/>
</dbReference>
<dbReference type="GO" id="GO:0003989">
    <property type="term" value="F:acetyl-CoA carboxylase activity"/>
    <property type="evidence" value="ECO:0007669"/>
    <property type="project" value="InterPro"/>
</dbReference>
<dbReference type="GO" id="GO:0005524">
    <property type="term" value="F:ATP binding"/>
    <property type="evidence" value="ECO:0007669"/>
    <property type="project" value="UniProtKB-KW"/>
</dbReference>
<dbReference type="GO" id="GO:0016743">
    <property type="term" value="F:carboxyl- or carbamoyltransferase activity"/>
    <property type="evidence" value="ECO:0007669"/>
    <property type="project" value="UniProtKB-UniRule"/>
</dbReference>
<dbReference type="GO" id="GO:0006633">
    <property type="term" value="P:fatty acid biosynthetic process"/>
    <property type="evidence" value="ECO:0007669"/>
    <property type="project" value="UniProtKB-KW"/>
</dbReference>
<dbReference type="GO" id="GO:2001295">
    <property type="term" value="P:malonyl-CoA biosynthetic process"/>
    <property type="evidence" value="ECO:0007669"/>
    <property type="project" value="UniProtKB-UniRule"/>
</dbReference>
<dbReference type="Gene3D" id="3.90.226.10">
    <property type="entry name" value="2-enoyl-CoA Hydratase, Chain A, domain 1"/>
    <property type="match status" value="1"/>
</dbReference>
<dbReference type="HAMAP" id="MF_00823">
    <property type="entry name" value="AcetylCoA_CT_alpha"/>
    <property type="match status" value="1"/>
</dbReference>
<dbReference type="InterPro" id="IPR001095">
    <property type="entry name" value="Acetyl_CoA_COase_a_su"/>
</dbReference>
<dbReference type="InterPro" id="IPR029045">
    <property type="entry name" value="ClpP/crotonase-like_dom_sf"/>
</dbReference>
<dbReference type="InterPro" id="IPR011763">
    <property type="entry name" value="COA_CT_C"/>
</dbReference>
<dbReference type="NCBIfam" id="TIGR00513">
    <property type="entry name" value="accA"/>
    <property type="match status" value="1"/>
</dbReference>
<dbReference type="NCBIfam" id="NF041504">
    <property type="entry name" value="AccA_sub"/>
    <property type="match status" value="1"/>
</dbReference>
<dbReference type="NCBIfam" id="NF004344">
    <property type="entry name" value="PRK05724.1"/>
    <property type="match status" value="1"/>
</dbReference>
<dbReference type="PANTHER" id="PTHR42853">
    <property type="entry name" value="ACETYL-COENZYME A CARBOXYLASE CARBOXYL TRANSFERASE SUBUNIT ALPHA"/>
    <property type="match status" value="1"/>
</dbReference>
<dbReference type="PANTHER" id="PTHR42853:SF3">
    <property type="entry name" value="ACETYL-COENZYME A CARBOXYLASE CARBOXYL TRANSFERASE SUBUNIT ALPHA, CHLOROPLASTIC"/>
    <property type="match status" value="1"/>
</dbReference>
<dbReference type="Pfam" id="PF03255">
    <property type="entry name" value="ACCA"/>
    <property type="match status" value="1"/>
</dbReference>
<dbReference type="PRINTS" id="PR01069">
    <property type="entry name" value="ACCCTRFRASEA"/>
</dbReference>
<dbReference type="SUPFAM" id="SSF52096">
    <property type="entry name" value="ClpP/crotonase"/>
    <property type="match status" value="1"/>
</dbReference>
<dbReference type="PROSITE" id="PS50989">
    <property type="entry name" value="COA_CT_CTER"/>
    <property type="match status" value="1"/>
</dbReference>
<keyword id="KW-0067">ATP-binding</keyword>
<keyword id="KW-0963">Cytoplasm</keyword>
<keyword id="KW-0275">Fatty acid biosynthesis</keyword>
<keyword id="KW-0276">Fatty acid metabolism</keyword>
<keyword id="KW-0444">Lipid biosynthesis</keyword>
<keyword id="KW-0443">Lipid metabolism</keyword>
<keyword id="KW-0547">Nucleotide-binding</keyword>
<keyword id="KW-1185">Reference proteome</keyword>
<keyword id="KW-0808">Transferase</keyword>
<gene>
    <name evidence="1" type="primary">accA</name>
    <name type="ordered locus">NIS_0316</name>
</gene>